<reference key="1">
    <citation type="journal article" date="1993" name="Toxicon">
        <title>Purification and partial characterization of two cytolysins from a tropical sea anemone, Heteractis magnifica.</title>
        <authorList>
            <person name="Khoo K.S."/>
            <person name="Kam W.K."/>
            <person name="Khoo H.E."/>
            <person name="Gopalakrishnakone P."/>
            <person name="Chung M.C."/>
        </authorList>
    </citation>
    <scope>PROTEIN SEQUENCE</scope>
    <scope>FUNCTION</scope>
    <scope>TOXIC DOSE</scope>
</reference>
<reference key="2">
    <citation type="journal article" date="2009" name="Toxicon">
        <title>Molecular mechanism of pore formation by actinoporins.</title>
        <authorList>
            <person name="Kristan K.C."/>
            <person name="Viero G."/>
            <person name="Dalla Serra M."/>
            <person name="Macek P."/>
            <person name="Anderluh G."/>
        </authorList>
    </citation>
    <scope>REVIEW</scope>
</reference>
<keyword id="KW-0204">Cytolysis</keyword>
<keyword id="KW-0903">Direct protein sequencing</keyword>
<keyword id="KW-0406">Ion transport</keyword>
<keyword id="KW-0472">Membrane</keyword>
<keyword id="KW-0166">Nematocyst</keyword>
<keyword id="KW-0964">Secreted</keyword>
<keyword id="KW-1052">Target cell membrane</keyword>
<keyword id="KW-1053">Target membrane</keyword>
<keyword id="KW-0800">Toxin</keyword>
<keyword id="KW-0812">Transmembrane</keyword>
<keyword id="KW-0813">Transport</keyword>
<evidence type="ECO:0000250" key="1">
    <source>
        <dbReference type="UniProtKB" id="B9W5G6"/>
    </source>
</evidence>
<evidence type="ECO:0000250" key="2">
    <source>
        <dbReference type="UniProtKB" id="P07845"/>
    </source>
</evidence>
<evidence type="ECO:0000250" key="3">
    <source>
        <dbReference type="UniProtKB" id="P61914"/>
    </source>
</evidence>
<evidence type="ECO:0000269" key="4">
    <source>
    </source>
</evidence>
<evidence type="ECO:0000303" key="5">
    <source>
    </source>
</evidence>
<evidence type="ECO:0000305" key="6"/>
<accession>P58690</accession>
<dbReference type="GO" id="GO:0005576">
    <property type="term" value="C:extracellular region"/>
    <property type="evidence" value="ECO:0007669"/>
    <property type="project" value="UniProtKB-SubCell"/>
</dbReference>
<dbReference type="GO" id="GO:0016020">
    <property type="term" value="C:membrane"/>
    <property type="evidence" value="ECO:0007669"/>
    <property type="project" value="UniProtKB-KW"/>
</dbReference>
<dbReference type="GO" id="GO:0042151">
    <property type="term" value="C:nematocyst"/>
    <property type="evidence" value="ECO:0007669"/>
    <property type="project" value="UniProtKB-SubCell"/>
</dbReference>
<dbReference type="GO" id="GO:0044218">
    <property type="term" value="C:other organism cell membrane"/>
    <property type="evidence" value="ECO:0007669"/>
    <property type="project" value="UniProtKB-KW"/>
</dbReference>
<dbReference type="GO" id="GO:0090729">
    <property type="term" value="F:toxin activity"/>
    <property type="evidence" value="ECO:0007669"/>
    <property type="project" value="UniProtKB-KW"/>
</dbReference>
<dbReference type="GO" id="GO:0031640">
    <property type="term" value="P:killing of cells of another organism"/>
    <property type="evidence" value="ECO:0007669"/>
    <property type="project" value="UniProtKB-KW"/>
</dbReference>
<dbReference type="GO" id="GO:0006811">
    <property type="term" value="P:monoatomic ion transport"/>
    <property type="evidence" value="ECO:0007669"/>
    <property type="project" value="UniProtKB-KW"/>
</dbReference>
<sequence>SAALAGTIIDGASLGFDILNKV</sequence>
<comment type="function">
    <text evidence="4">Pore-forming protein that forms cations-selective hydrophilic pores of around 1 nm and causes cytolysis. Pore formation is a multi-step process that involves specific recognition of membrane sphingomyelin (but neither cholesterol nor phosphatidylcholine) using aromatic rich region and adjacent phosphocholine (POC) binding site, firm binding to the membrane (mainly driven by hydrophobic interactions) accompanied by the transfer of the N-terminal region to the lipid-water interface and finally pore formation after oligomerization of monomers.</text>
</comment>
<comment type="subunit">
    <text evidence="1">Octamer or nonamer in membranes. Monomer in the soluble state.</text>
</comment>
<comment type="subcellular location">
    <subcellularLocation>
        <location evidence="1">Secreted</location>
    </subcellularLocation>
    <subcellularLocation>
        <location evidence="2">Nematocyst</location>
    </subcellularLocation>
    <subcellularLocation>
        <location evidence="1">Target cell membrane</location>
    </subcellularLocation>
    <text evidence="1">Forms an alpha-helical membrane channel in the prey.</text>
</comment>
<comment type="domain">
    <text evidence="3">Composed of a long N-terminal alpha-helix and a core region rich in beta-sheet structures. Before the pore formation, the alpha-helix binds the lipid membrane, partitions into the lipid-water interface and stabilizes the monomeric molecule on the membrane. Finally, it traverses the bilayer, thus forming the transmembrane pore.</text>
</comment>
<comment type="toxic dose">
    <text evidence="4">LD(50) is 320 ug/kg by intravenous injection into mice.</text>
</comment>
<comment type="miscellaneous">
    <text>Hemolytic activity is 3.3 x 10(4) HU/mg.</text>
</comment>
<comment type="miscellaneous">
    <text evidence="6">A synonymy between H.magnifica and R.crispa is controversial.</text>
</comment>
<comment type="similarity">
    <text evidence="6">Belongs to the actinoporin family. Sea anemone subfamily.</text>
</comment>
<feature type="chain" id="PRO_0000221535" description="Magnificalysin II">
    <location>
        <begin position="1"/>
        <end position="22" status="greater than"/>
    </location>
</feature>
<feature type="region of interest" description="Plays an important role in the hemolytic activity" evidence="2">
    <location>
        <begin position="3"/>
        <end position="12"/>
    </location>
</feature>
<feature type="region of interest" description="N-terminal region" evidence="3">
    <location>
        <begin position="11"/>
        <end position="22" status="greater than"/>
    </location>
</feature>
<feature type="non-terminal residue">
    <location>
        <position position="22"/>
    </location>
</feature>
<name>ACT22_HETMG</name>
<protein>
    <recommendedName>
        <fullName evidence="5">Magnificalysin II</fullName>
        <shortName>HMg II</shortName>
    </recommendedName>
    <alternativeName>
        <fullName>Cytolysin II</fullName>
    </alternativeName>
    <alternativeName>
        <fullName evidence="6">DELTA-stichotoxin</fullName>
    </alternativeName>
</protein>
<proteinExistence type="evidence at protein level"/>
<organism>
    <name type="scientific">Heteractis magnifica</name>
    <name type="common">Magnificent sea anemone</name>
    <name type="synonym">Radianthus magnifica</name>
    <dbReference type="NCBI Taxonomy" id="38281"/>
    <lineage>
        <taxon>Eukaryota</taxon>
        <taxon>Metazoa</taxon>
        <taxon>Cnidaria</taxon>
        <taxon>Anthozoa</taxon>
        <taxon>Hexacorallia</taxon>
        <taxon>Actiniaria</taxon>
        <taxon>Stichodactylidae</taxon>
        <taxon>Heteractis</taxon>
    </lineage>
</organism>